<keyword id="KW-0150">Chloroplast</keyword>
<keyword id="KW-0240">DNA-directed RNA polymerase</keyword>
<keyword id="KW-0479">Metal-binding</keyword>
<keyword id="KW-0548">Nucleotidyltransferase</keyword>
<keyword id="KW-0934">Plastid</keyword>
<keyword id="KW-0804">Transcription</keyword>
<keyword id="KW-0808">Transferase</keyword>
<keyword id="KW-0862">Zinc</keyword>
<evidence type="ECO:0000255" key="1">
    <source>
        <dbReference type="HAMAP-Rule" id="MF_01324"/>
    </source>
</evidence>
<feature type="chain" id="PRO_0000310398" description="DNA-directed RNA polymerase subunit beta''">
    <location>
        <begin position="1"/>
        <end position="1595"/>
    </location>
</feature>
<feature type="binding site" evidence="1">
    <location>
        <position position="216"/>
    </location>
    <ligand>
        <name>Zn(2+)</name>
        <dbReference type="ChEBI" id="CHEBI:29105"/>
    </ligand>
</feature>
<feature type="binding site" evidence="1">
    <location>
        <position position="286"/>
    </location>
    <ligand>
        <name>Zn(2+)</name>
        <dbReference type="ChEBI" id="CHEBI:29105"/>
    </ligand>
</feature>
<feature type="binding site" evidence="1">
    <location>
        <position position="294"/>
    </location>
    <ligand>
        <name>Zn(2+)</name>
        <dbReference type="ChEBI" id="CHEBI:29105"/>
    </ligand>
</feature>
<feature type="binding site" evidence="1">
    <location>
        <position position="297"/>
    </location>
    <ligand>
        <name>Zn(2+)</name>
        <dbReference type="ChEBI" id="CHEBI:29105"/>
    </ligand>
</feature>
<sequence>MEKIFFNYPFNKGKLKTLLIWSILNTGQYNMINLVENLKKVGFQYATTAGISLGIDDLKTISTKYDLIEKTNDNIKDITNHLNLAVLNEVEHSQKLINSWQKISEILKININKKFKTVNKLNPIYMMAFSGARGNISQVRQLIGMRGLMADPNGQIIHLPIKSNFREGLTVTEYLISCYGARKGVVDTALRTATAGYLTRRLVDTAQHVIISQLDCGTKQGIFLSNLYQGTDILLALKDQLYGRVLGKDIKINSLMYLKNQQIDDSLSILLANHLKRVFIRSPLTCKASNSTLCQLCYGWNLSHSKLISLGEIVGVIAAQSIGEPGTQLTMRTFHTGGVFSGNVKSQLYSPFDGIVEYSSSLYGDIVNLYNGNFAFLVKRKGLIIINPIIKKIKPKKFEAILYTLVFVKNNEKVKKNQLIAQQSNKISNTQQIEGKYTVNSKLEGEILFDENHLSTNKKKIWILHGKIYKSVFPLQLFPKKNDFLSYKFPLAQAKLLNLSASFLKVCVVRKKRHFIKDNISQSNEILLFTEYPLYKFLIKNIKNYHQFQFFYPIQNKIKEVEKSLRINNKVIKDNRIKIPFNSIAKSKLLNLLNKRLEQNTFFSKNTFSNYYENTDERTTWFTQNSILKYNAIYFYKSSKSVEAKTSRKIPITFNSKNFLIKEKLFFIKNNSVLLPIFSSDFFTKFTLKNEYFKPKHNIQRKLGFLSPTSYFKYISNNYFLKYLNFYQKHISVEMNDIIKVKLYYKQEFEEKTNFKKQNLHKIDSKINLFMNKLILVIEHLILTKLFSTKINNINYLLFYFNYLKYLKESNKFTIFYCNKKKETIFDLLFLLKTLNTTSNLIILAENKISTKLLSEFIYQTIYLIKNNITINSTNSVLENFNYFQQRKEDLFQHRNIFEKVPNFSGKRFSNLSLNINNENYSISKAENKMLIQDLLTLTILNNNIKYFNSHKSFLDKRFFYNESLPIPKILKDFTSILNRINFWSFSSSQFYKKHFLFALKTDNLINIKNKNFIFISRIPQIQAVNFALKKSLKSSFDLKSYEILQYNLKFPLGFYSLIKMIIEERSLFDIDYFQKFIIQYKNFSFHLINKKLKNIFTNNSYGSFTDESTLLESKYFNKRRPTKTTFSKLMNQIKFKFFIKVPLLLSTFSKKDTVLFNIFITNKKENFRNYKIVNMLTNDFYKNLNLQTHSSEKNSQLKLSSKNLEIFNLFYTSSIINVIMKKSITNFNKNFFIDNLFQFSKTHFNWLPKWDTIVRIQFLSPYQGEIIAQNIVKYSGYKTLYNHLMILTKNEKLQVSIFRNKNQETIIKKDTKNYFITKPHCCKIYPKFGSLIYSTSQVSPGKKINQSGQIIEKSNSFLVLRKGTPLLSPITGIFYVWNGDFVSQGSPIMTLLYNKLKTGDIVQGIPKIEHFFEARKGNVDLIQTNLYIKLLAFFKKYNKTLSEYRAVKRSILKIQKIIIDGVCRVYCSQGILVSRKHFEVIVKQMTSKVKIVNGGETGLLEGEFINFQKLEKINTNLYHRRVVYEPLVLGITKVSLRTESFISSASFQETTKVLSQAALEKRIDFLNGLKENVILGKLIPGGTGLIVKIITNKI</sequence>
<organism>
    <name type="scientific">Bigelowiella natans</name>
    <name type="common">Pedinomonas minutissima</name>
    <name type="synonym">Chlorarachnion sp. (strain CCMP621)</name>
    <dbReference type="NCBI Taxonomy" id="227086"/>
    <lineage>
        <taxon>Eukaryota</taxon>
        <taxon>Sar</taxon>
        <taxon>Rhizaria</taxon>
        <taxon>Cercozoa</taxon>
        <taxon>Chlorarachniophyceae</taxon>
        <taxon>Bigelowiella</taxon>
    </lineage>
</organism>
<protein>
    <recommendedName>
        <fullName evidence="1">DNA-directed RNA polymerase subunit beta''</fullName>
        <ecNumber evidence="1">2.7.7.6</ecNumber>
    </recommendedName>
    <alternativeName>
        <fullName evidence="1">PEP</fullName>
    </alternativeName>
    <alternativeName>
        <fullName evidence="1">Plastid-encoded RNA polymerase subunit beta''</fullName>
        <shortName evidence="1">RNA polymerase subunit beta''</shortName>
    </alternativeName>
</protein>
<reference key="1">
    <citation type="journal article" date="2007" name="Mol. Biol. Evol.">
        <title>The complete chloroplast genome of the chlorarachniophyte Bigelowiella natans: evidence for independent origins of chlorarachniophyte and euglenid secondary endosymbionts.</title>
        <authorList>
            <person name="Rogers M.B."/>
            <person name="Gilson P.R."/>
            <person name="Su V."/>
            <person name="McFadden G.I."/>
            <person name="Keeling P.J."/>
        </authorList>
    </citation>
    <scope>NUCLEOTIDE SEQUENCE [LARGE SCALE GENOMIC DNA]</scope>
</reference>
<proteinExistence type="inferred from homology"/>
<geneLocation type="chloroplast"/>
<name>RPOC2_BIGNA</name>
<accession>Q06J19</accession>
<dbReference type="EC" id="2.7.7.6" evidence="1"/>
<dbReference type="EMBL" id="DQ851108">
    <property type="protein sequence ID" value="ABG91440.1"/>
    <property type="molecule type" value="Genomic_DNA"/>
</dbReference>
<dbReference type="RefSeq" id="YP_778608.1">
    <property type="nucleotide sequence ID" value="NC_008408.1"/>
</dbReference>
<dbReference type="SMR" id="Q06J19"/>
<dbReference type="GeneID" id="4353025"/>
<dbReference type="GO" id="GO:0009507">
    <property type="term" value="C:chloroplast"/>
    <property type="evidence" value="ECO:0007669"/>
    <property type="project" value="UniProtKB-SubCell"/>
</dbReference>
<dbReference type="GO" id="GO:0000428">
    <property type="term" value="C:DNA-directed RNA polymerase complex"/>
    <property type="evidence" value="ECO:0007669"/>
    <property type="project" value="UniProtKB-KW"/>
</dbReference>
<dbReference type="GO" id="GO:0005739">
    <property type="term" value="C:mitochondrion"/>
    <property type="evidence" value="ECO:0007669"/>
    <property type="project" value="GOC"/>
</dbReference>
<dbReference type="GO" id="GO:0003677">
    <property type="term" value="F:DNA binding"/>
    <property type="evidence" value="ECO:0007669"/>
    <property type="project" value="UniProtKB-UniRule"/>
</dbReference>
<dbReference type="GO" id="GO:0003899">
    <property type="term" value="F:DNA-directed RNA polymerase activity"/>
    <property type="evidence" value="ECO:0007669"/>
    <property type="project" value="UniProtKB-UniRule"/>
</dbReference>
<dbReference type="GO" id="GO:0008270">
    <property type="term" value="F:zinc ion binding"/>
    <property type="evidence" value="ECO:0007669"/>
    <property type="project" value="UniProtKB-UniRule"/>
</dbReference>
<dbReference type="GO" id="GO:0006351">
    <property type="term" value="P:DNA-templated transcription"/>
    <property type="evidence" value="ECO:0007669"/>
    <property type="project" value="UniProtKB-UniRule"/>
</dbReference>
<dbReference type="CDD" id="cd02655">
    <property type="entry name" value="RNAP_beta'_C"/>
    <property type="match status" value="1"/>
</dbReference>
<dbReference type="Gene3D" id="1.10.132.30">
    <property type="match status" value="1"/>
</dbReference>
<dbReference type="Gene3D" id="1.10.150.390">
    <property type="match status" value="1"/>
</dbReference>
<dbReference type="Gene3D" id="1.10.1790.20">
    <property type="match status" value="1"/>
</dbReference>
<dbReference type="Gene3D" id="1.10.274.100">
    <property type="entry name" value="RNA polymerase Rpb1, domain 3"/>
    <property type="match status" value="1"/>
</dbReference>
<dbReference type="HAMAP" id="MF_01324">
    <property type="entry name" value="RNApol_bact_RpoC2"/>
    <property type="match status" value="1"/>
</dbReference>
<dbReference type="InterPro" id="IPR012756">
    <property type="entry name" value="DNA-dir_RpoC2_beta_pp"/>
</dbReference>
<dbReference type="InterPro" id="IPR045867">
    <property type="entry name" value="DNA-dir_RpoC_beta_prime"/>
</dbReference>
<dbReference type="InterPro" id="IPR042102">
    <property type="entry name" value="RNA_pol_Rpb1_3_sf"/>
</dbReference>
<dbReference type="InterPro" id="IPR007083">
    <property type="entry name" value="RNA_pol_Rpb1_4"/>
</dbReference>
<dbReference type="InterPro" id="IPR007081">
    <property type="entry name" value="RNA_pol_Rpb1_5"/>
</dbReference>
<dbReference type="InterPro" id="IPR038120">
    <property type="entry name" value="Rpb1_funnel_sf"/>
</dbReference>
<dbReference type="NCBIfam" id="TIGR02388">
    <property type="entry name" value="rpoC2_cyan"/>
    <property type="match status" value="1"/>
</dbReference>
<dbReference type="PANTHER" id="PTHR19376">
    <property type="entry name" value="DNA-DIRECTED RNA POLYMERASE"/>
    <property type="match status" value="1"/>
</dbReference>
<dbReference type="PANTHER" id="PTHR19376:SF68">
    <property type="entry name" value="DNA-DIRECTED RNA POLYMERASE SUBUNIT BETA"/>
    <property type="match status" value="1"/>
</dbReference>
<dbReference type="Pfam" id="PF05000">
    <property type="entry name" value="RNA_pol_Rpb1_4"/>
    <property type="match status" value="1"/>
</dbReference>
<dbReference type="Pfam" id="PF04998">
    <property type="entry name" value="RNA_pol_Rpb1_5"/>
    <property type="match status" value="1"/>
</dbReference>
<dbReference type="SUPFAM" id="SSF64484">
    <property type="entry name" value="beta and beta-prime subunits of DNA dependent RNA-polymerase"/>
    <property type="match status" value="3"/>
</dbReference>
<gene>
    <name evidence="1" type="primary">rpoC2</name>
</gene>
<comment type="function">
    <text evidence="1">DNA-dependent RNA polymerase catalyzes the transcription of DNA into RNA using the four ribonucleoside triphosphates as substrates.</text>
</comment>
<comment type="catalytic activity">
    <reaction evidence="1">
        <text>RNA(n) + a ribonucleoside 5'-triphosphate = RNA(n+1) + diphosphate</text>
        <dbReference type="Rhea" id="RHEA:21248"/>
        <dbReference type="Rhea" id="RHEA-COMP:14527"/>
        <dbReference type="Rhea" id="RHEA-COMP:17342"/>
        <dbReference type="ChEBI" id="CHEBI:33019"/>
        <dbReference type="ChEBI" id="CHEBI:61557"/>
        <dbReference type="ChEBI" id="CHEBI:140395"/>
        <dbReference type="EC" id="2.7.7.6"/>
    </reaction>
</comment>
<comment type="cofactor">
    <cofactor evidence="1">
        <name>Zn(2+)</name>
        <dbReference type="ChEBI" id="CHEBI:29105"/>
    </cofactor>
    <text evidence="1">Binds 1 Zn(2+) ion per subunit.</text>
</comment>
<comment type="subunit">
    <text evidence="1">In plastids the minimal PEP RNA polymerase catalytic core is composed of four subunits: alpha, beta, beta', and beta''. When a (nuclear-encoded) sigma factor is associated with the core the holoenzyme is formed, which can initiate transcription.</text>
</comment>
<comment type="subcellular location">
    <subcellularLocation>
        <location evidence="1">Plastid</location>
        <location evidence="1">Chloroplast</location>
    </subcellularLocation>
</comment>
<comment type="similarity">
    <text evidence="1">Belongs to the RNA polymerase beta' chain family. RpoC2 subfamily.</text>
</comment>